<keyword id="KW-0687">Ribonucleoprotein</keyword>
<keyword id="KW-0689">Ribosomal protein</keyword>
<proteinExistence type="inferred from homology"/>
<gene>
    <name evidence="1" type="primary">rplQ</name>
    <name type="ordered locus">BT9727_0133</name>
</gene>
<sequence>MAYRKLGRTSAQRKAMLRDLATDLIINERIQTTETRAKELRSVVEKMITLGKRGDLHARRQAAAFIRNEVANAETGQDALQKLFADVAPRYAERQGGYTRIAKIGPRRGDAAPMVIIELV</sequence>
<name>RL17_BACHK</name>
<accession>Q6HPN1</accession>
<feature type="chain" id="PRO_0000267827" description="Large ribosomal subunit protein bL17">
    <location>
        <begin position="1"/>
        <end position="120"/>
    </location>
</feature>
<reference key="1">
    <citation type="journal article" date="2006" name="J. Bacteriol.">
        <title>Pathogenomic sequence analysis of Bacillus cereus and Bacillus thuringiensis isolates closely related to Bacillus anthracis.</title>
        <authorList>
            <person name="Han C.S."/>
            <person name="Xie G."/>
            <person name="Challacombe J.F."/>
            <person name="Altherr M.R."/>
            <person name="Bhotika S.S."/>
            <person name="Bruce D."/>
            <person name="Campbell C.S."/>
            <person name="Campbell M.L."/>
            <person name="Chen J."/>
            <person name="Chertkov O."/>
            <person name="Cleland C."/>
            <person name="Dimitrijevic M."/>
            <person name="Doggett N.A."/>
            <person name="Fawcett J.J."/>
            <person name="Glavina T."/>
            <person name="Goodwin L.A."/>
            <person name="Hill K.K."/>
            <person name="Hitchcock P."/>
            <person name="Jackson P.J."/>
            <person name="Keim P."/>
            <person name="Kewalramani A.R."/>
            <person name="Longmire J."/>
            <person name="Lucas S."/>
            <person name="Malfatti S."/>
            <person name="McMurry K."/>
            <person name="Meincke L.J."/>
            <person name="Misra M."/>
            <person name="Moseman B.L."/>
            <person name="Mundt M."/>
            <person name="Munk A.C."/>
            <person name="Okinaka R.T."/>
            <person name="Parson-Quintana B."/>
            <person name="Reilly L.P."/>
            <person name="Richardson P."/>
            <person name="Robinson D.L."/>
            <person name="Rubin E."/>
            <person name="Saunders E."/>
            <person name="Tapia R."/>
            <person name="Tesmer J.G."/>
            <person name="Thayer N."/>
            <person name="Thompson L.S."/>
            <person name="Tice H."/>
            <person name="Ticknor L.O."/>
            <person name="Wills P.L."/>
            <person name="Brettin T.S."/>
            <person name="Gilna P."/>
        </authorList>
    </citation>
    <scope>NUCLEOTIDE SEQUENCE [LARGE SCALE GENOMIC DNA]</scope>
    <source>
        <strain>97-27</strain>
    </source>
</reference>
<comment type="subunit">
    <text evidence="1">Part of the 50S ribosomal subunit. Contacts protein L32.</text>
</comment>
<comment type="similarity">
    <text evidence="1">Belongs to the bacterial ribosomal protein bL17 family.</text>
</comment>
<dbReference type="EMBL" id="AE017355">
    <property type="protein sequence ID" value="AAT63887.1"/>
    <property type="molecule type" value="Genomic_DNA"/>
</dbReference>
<dbReference type="RefSeq" id="WP_000331490.1">
    <property type="nucleotide sequence ID" value="NC_005957.1"/>
</dbReference>
<dbReference type="RefSeq" id="YP_034489.1">
    <property type="nucleotide sequence ID" value="NC_005957.1"/>
</dbReference>
<dbReference type="SMR" id="Q6HPN1"/>
<dbReference type="GeneID" id="93010915"/>
<dbReference type="KEGG" id="btk:BT9727_0133"/>
<dbReference type="PATRIC" id="fig|281309.8.peg.135"/>
<dbReference type="HOGENOM" id="CLU_074407_2_2_9"/>
<dbReference type="PRO" id="PR:Q6HPN1"/>
<dbReference type="Proteomes" id="UP000001301">
    <property type="component" value="Chromosome"/>
</dbReference>
<dbReference type="GO" id="GO:0022625">
    <property type="term" value="C:cytosolic large ribosomal subunit"/>
    <property type="evidence" value="ECO:0007669"/>
    <property type="project" value="TreeGrafter"/>
</dbReference>
<dbReference type="GO" id="GO:0003735">
    <property type="term" value="F:structural constituent of ribosome"/>
    <property type="evidence" value="ECO:0007669"/>
    <property type="project" value="InterPro"/>
</dbReference>
<dbReference type="GO" id="GO:0006412">
    <property type="term" value="P:translation"/>
    <property type="evidence" value="ECO:0007669"/>
    <property type="project" value="UniProtKB-UniRule"/>
</dbReference>
<dbReference type="FunFam" id="3.90.1030.10:FF:000002">
    <property type="entry name" value="50S ribosomal protein L17"/>
    <property type="match status" value="1"/>
</dbReference>
<dbReference type="Gene3D" id="3.90.1030.10">
    <property type="entry name" value="Ribosomal protein L17"/>
    <property type="match status" value="1"/>
</dbReference>
<dbReference type="HAMAP" id="MF_01368">
    <property type="entry name" value="Ribosomal_bL17"/>
    <property type="match status" value="1"/>
</dbReference>
<dbReference type="InterPro" id="IPR000456">
    <property type="entry name" value="Ribosomal_bL17"/>
</dbReference>
<dbReference type="InterPro" id="IPR047859">
    <property type="entry name" value="Ribosomal_bL17_CS"/>
</dbReference>
<dbReference type="InterPro" id="IPR036373">
    <property type="entry name" value="Ribosomal_bL17_sf"/>
</dbReference>
<dbReference type="NCBIfam" id="TIGR00059">
    <property type="entry name" value="L17"/>
    <property type="match status" value="1"/>
</dbReference>
<dbReference type="PANTHER" id="PTHR14413:SF16">
    <property type="entry name" value="LARGE RIBOSOMAL SUBUNIT PROTEIN BL17M"/>
    <property type="match status" value="1"/>
</dbReference>
<dbReference type="PANTHER" id="PTHR14413">
    <property type="entry name" value="RIBOSOMAL PROTEIN L17"/>
    <property type="match status" value="1"/>
</dbReference>
<dbReference type="Pfam" id="PF01196">
    <property type="entry name" value="Ribosomal_L17"/>
    <property type="match status" value="1"/>
</dbReference>
<dbReference type="SUPFAM" id="SSF64263">
    <property type="entry name" value="Prokaryotic ribosomal protein L17"/>
    <property type="match status" value="1"/>
</dbReference>
<dbReference type="PROSITE" id="PS01167">
    <property type="entry name" value="RIBOSOMAL_L17"/>
    <property type="match status" value="1"/>
</dbReference>
<protein>
    <recommendedName>
        <fullName evidence="1">Large ribosomal subunit protein bL17</fullName>
    </recommendedName>
    <alternativeName>
        <fullName evidence="2">50S ribosomal protein L17</fullName>
    </alternativeName>
</protein>
<organism>
    <name type="scientific">Bacillus thuringiensis subsp. konkukian (strain 97-27)</name>
    <dbReference type="NCBI Taxonomy" id="281309"/>
    <lineage>
        <taxon>Bacteria</taxon>
        <taxon>Bacillati</taxon>
        <taxon>Bacillota</taxon>
        <taxon>Bacilli</taxon>
        <taxon>Bacillales</taxon>
        <taxon>Bacillaceae</taxon>
        <taxon>Bacillus</taxon>
        <taxon>Bacillus cereus group</taxon>
    </lineage>
</organism>
<evidence type="ECO:0000255" key="1">
    <source>
        <dbReference type="HAMAP-Rule" id="MF_01368"/>
    </source>
</evidence>
<evidence type="ECO:0000305" key="2"/>